<proteinExistence type="inferred from homology"/>
<comment type="function">
    <text evidence="1">RNaseP catalyzes the removal of the 5'-leader sequence from pre-tRNA to produce the mature 5'-terminus. It can also cleave other RNA substrates such as 4.5S RNA. The protein component plays an auxiliary but essential role in vivo by binding to the 5'-leader sequence and broadening the substrate specificity of the ribozyme.</text>
</comment>
<comment type="catalytic activity">
    <reaction evidence="1">
        <text>Endonucleolytic cleavage of RNA, removing 5'-extranucleotides from tRNA precursor.</text>
        <dbReference type="EC" id="3.1.26.5"/>
    </reaction>
</comment>
<comment type="subunit">
    <text evidence="1">Consists of a catalytic RNA component (M1 or rnpB) and a protein subunit.</text>
</comment>
<comment type="similarity">
    <text evidence="1">Belongs to the RnpA family.</text>
</comment>
<evidence type="ECO:0000255" key="1">
    <source>
        <dbReference type="HAMAP-Rule" id="MF_00227"/>
    </source>
</evidence>
<name>RNPA_RICPU</name>
<gene>
    <name evidence="1" type="primary">rnpA</name>
    <name type="ordered locus">RPR_03615</name>
</gene>
<organism>
    <name type="scientific">Rickettsia peacockii (strain Rustic)</name>
    <dbReference type="NCBI Taxonomy" id="562019"/>
    <lineage>
        <taxon>Bacteria</taxon>
        <taxon>Pseudomonadati</taxon>
        <taxon>Pseudomonadota</taxon>
        <taxon>Alphaproteobacteria</taxon>
        <taxon>Rickettsiales</taxon>
        <taxon>Rickettsiaceae</taxon>
        <taxon>Rickettsieae</taxon>
        <taxon>Rickettsia</taxon>
        <taxon>spotted fever group</taxon>
    </lineage>
</organism>
<feature type="chain" id="PRO_1000204354" description="Ribonuclease P protein component">
    <location>
        <begin position="1"/>
        <end position="118"/>
    </location>
</feature>
<accession>C4K1K8</accession>
<keyword id="KW-0255">Endonuclease</keyword>
<keyword id="KW-0378">Hydrolase</keyword>
<keyword id="KW-0540">Nuclease</keyword>
<keyword id="KW-0694">RNA-binding</keyword>
<keyword id="KW-0819">tRNA processing</keyword>
<protein>
    <recommendedName>
        <fullName evidence="1">Ribonuclease P protein component</fullName>
        <shortName evidence="1">RNase P protein</shortName>
        <shortName evidence="1">RNaseP protein</shortName>
        <ecNumber evidence="1">3.1.26.5</ecNumber>
    </recommendedName>
    <alternativeName>
        <fullName evidence="1">Protein C5</fullName>
    </alternativeName>
</protein>
<dbReference type="EC" id="3.1.26.5" evidence="1"/>
<dbReference type="EMBL" id="CP001227">
    <property type="protein sequence ID" value="ACR47459.1"/>
    <property type="molecule type" value="Genomic_DNA"/>
</dbReference>
<dbReference type="RefSeq" id="WP_012736698.1">
    <property type="nucleotide sequence ID" value="NC_012730.1"/>
</dbReference>
<dbReference type="SMR" id="C4K1K8"/>
<dbReference type="KEGG" id="rpk:RPR_03615"/>
<dbReference type="HOGENOM" id="CLU_2047938_0_0_5"/>
<dbReference type="Proteomes" id="UP000005015">
    <property type="component" value="Chromosome"/>
</dbReference>
<dbReference type="GO" id="GO:0030677">
    <property type="term" value="C:ribonuclease P complex"/>
    <property type="evidence" value="ECO:0007669"/>
    <property type="project" value="TreeGrafter"/>
</dbReference>
<dbReference type="GO" id="GO:0042781">
    <property type="term" value="F:3'-tRNA processing endoribonuclease activity"/>
    <property type="evidence" value="ECO:0007669"/>
    <property type="project" value="TreeGrafter"/>
</dbReference>
<dbReference type="GO" id="GO:0004526">
    <property type="term" value="F:ribonuclease P activity"/>
    <property type="evidence" value="ECO:0007669"/>
    <property type="project" value="UniProtKB-UniRule"/>
</dbReference>
<dbReference type="GO" id="GO:0000049">
    <property type="term" value="F:tRNA binding"/>
    <property type="evidence" value="ECO:0007669"/>
    <property type="project" value="UniProtKB-UniRule"/>
</dbReference>
<dbReference type="GO" id="GO:0001682">
    <property type="term" value="P:tRNA 5'-leader removal"/>
    <property type="evidence" value="ECO:0007669"/>
    <property type="project" value="UniProtKB-UniRule"/>
</dbReference>
<dbReference type="Gene3D" id="3.30.230.10">
    <property type="match status" value="1"/>
</dbReference>
<dbReference type="HAMAP" id="MF_00227">
    <property type="entry name" value="RNase_P"/>
    <property type="match status" value="1"/>
</dbReference>
<dbReference type="InterPro" id="IPR020568">
    <property type="entry name" value="Ribosomal_Su5_D2-typ_SF"/>
</dbReference>
<dbReference type="InterPro" id="IPR014721">
    <property type="entry name" value="Ribsml_uS5_D2-typ_fold_subgr"/>
</dbReference>
<dbReference type="InterPro" id="IPR000100">
    <property type="entry name" value="RNase_P"/>
</dbReference>
<dbReference type="InterPro" id="IPR020539">
    <property type="entry name" value="RNase_P_CS"/>
</dbReference>
<dbReference type="NCBIfam" id="TIGR00188">
    <property type="entry name" value="rnpA"/>
    <property type="match status" value="1"/>
</dbReference>
<dbReference type="PANTHER" id="PTHR33992">
    <property type="entry name" value="RIBONUCLEASE P PROTEIN COMPONENT"/>
    <property type="match status" value="1"/>
</dbReference>
<dbReference type="PANTHER" id="PTHR33992:SF1">
    <property type="entry name" value="RIBONUCLEASE P PROTEIN COMPONENT"/>
    <property type="match status" value="1"/>
</dbReference>
<dbReference type="Pfam" id="PF00825">
    <property type="entry name" value="Ribonuclease_P"/>
    <property type="match status" value="1"/>
</dbReference>
<dbReference type="SUPFAM" id="SSF54211">
    <property type="entry name" value="Ribosomal protein S5 domain 2-like"/>
    <property type="match status" value="1"/>
</dbReference>
<dbReference type="PROSITE" id="PS00648">
    <property type="entry name" value="RIBONUCLEASE_P"/>
    <property type="match status" value="1"/>
</dbReference>
<reference key="1">
    <citation type="journal article" date="2009" name="PLoS ONE">
        <title>Genome sequence of the endosymbiont Rickettsia peacockii and comparison with virulent Rickettsia rickettsii: identification of virulence factors.</title>
        <authorList>
            <person name="Felsheim R.F."/>
            <person name="Kurtti T.J."/>
            <person name="Munderloh U.G."/>
        </authorList>
    </citation>
    <scope>NUCLEOTIDE SEQUENCE [LARGE SCALE GENOMIC DNA]</scope>
    <source>
        <strain>Rustic</strain>
    </source>
</reference>
<sequence length="118" mass="13962">MSITSLKNQKEFELINKLGKKLHERYFILVIATKLPKIFLESKYNTFLGIKVSRKLSKKAVVRNKIKRRIRHLIRIIVSDSSFKAIKFAMIIIPRKGFEEINFSHLNYELSKVILRNM</sequence>